<keyword id="KW-0963">Cytoplasm</keyword>
<keyword id="KW-0378">Hydrolase</keyword>
<keyword id="KW-0546">Nucleotide metabolism</keyword>
<protein>
    <recommendedName>
        <fullName evidence="1">dTTP/UTP pyrophosphatase</fullName>
        <shortName evidence="1">dTTPase/UTPase</shortName>
        <ecNumber evidence="1">3.6.1.9</ecNumber>
    </recommendedName>
    <alternativeName>
        <fullName evidence="1">Nucleoside triphosphate pyrophosphatase</fullName>
    </alternativeName>
    <alternativeName>
        <fullName evidence="1">Nucleotide pyrophosphatase</fullName>
        <shortName evidence="1">Nucleotide PPase</shortName>
    </alternativeName>
</protein>
<dbReference type="EC" id="3.6.1.9" evidence="1"/>
<dbReference type="EMBL" id="AM039952">
    <property type="protein sequence ID" value="CAJ24607.1"/>
    <property type="molecule type" value="Genomic_DNA"/>
</dbReference>
<dbReference type="RefSeq" id="WP_011347998.1">
    <property type="nucleotide sequence ID" value="NZ_CP017190.1"/>
</dbReference>
<dbReference type="SMR" id="Q3BRF4"/>
<dbReference type="STRING" id="456327.BJD11_08220"/>
<dbReference type="KEGG" id="xcv:XCV2928"/>
<dbReference type="eggNOG" id="COG0424">
    <property type="taxonomic scope" value="Bacteria"/>
</dbReference>
<dbReference type="HOGENOM" id="CLU_040416_2_1_6"/>
<dbReference type="Proteomes" id="UP000007069">
    <property type="component" value="Chromosome"/>
</dbReference>
<dbReference type="GO" id="GO:0005737">
    <property type="term" value="C:cytoplasm"/>
    <property type="evidence" value="ECO:0007669"/>
    <property type="project" value="UniProtKB-SubCell"/>
</dbReference>
<dbReference type="GO" id="GO:0036218">
    <property type="term" value="F:dTTP diphosphatase activity"/>
    <property type="evidence" value="ECO:0007669"/>
    <property type="project" value="RHEA"/>
</dbReference>
<dbReference type="GO" id="GO:0036221">
    <property type="term" value="F:UTP diphosphatase activity"/>
    <property type="evidence" value="ECO:0007669"/>
    <property type="project" value="RHEA"/>
</dbReference>
<dbReference type="GO" id="GO:0009117">
    <property type="term" value="P:nucleotide metabolic process"/>
    <property type="evidence" value="ECO:0007669"/>
    <property type="project" value="UniProtKB-KW"/>
</dbReference>
<dbReference type="CDD" id="cd00555">
    <property type="entry name" value="Maf"/>
    <property type="match status" value="1"/>
</dbReference>
<dbReference type="Gene3D" id="3.90.950.10">
    <property type="match status" value="1"/>
</dbReference>
<dbReference type="HAMAP" id="MF_00528">
    <property type="entry name" value="Maf"/>
    <property type="match status" value="1"/>
</dbReference>
<dbReference type="InterPro" id="IPR029001">
    <property type="entry name" value="ITPase-like_fam"/>
</dbReference>
<dbReference type="InterPro" id="IPR003697">
    <property type="entry name" value="Maf-like"/>
</dbReference>
<dbReference type="NCBIfam" id="TIGR00172">
    <property type="entry name" value="maf"/>
    <property type="match status" value="1"/>
</dbReference>
<dbReference type="NCBIfam" id="NF003403">
    <property type="entry name" value="PRK04694.1"/>
    <property type="match status" value="1"/>
</dbReference>
<dbReference type="PANTHER" id="PTHR43213">
    <property type="entry name" value="BIFUNCTIONAL DTTP/UTP PYROPHOSPHATASE/METHYLTRANSFERASE PROTEIN-RELATED"/>
    <property type="match status" value="1"/>
</dbReference>
<dbReference type="PANTHER" id="PTHR43213:SF5">
    <property type="entry name" value="BIFUNCTIONAL DTTP_UTP PYROPHOSPHATASE_METHYLTRANSFERASE PROTEIN-RELATED"/>
    <property type="match status" value="1"/>
</dbReference>
<dbReference type="Pfam" id="PF02545">
    <property type="entry name" value="Maf"/>
    <property type="match status" value="1"/>
</dbReference>
<dbReference type="PIRSF" id="PIRSF006305">
    <property type="entry name" value="Maf"/>
    <property type="match status" value="1"/>
</dbReference>
<dbReference type="SUPFAM" id="SSF52972">
    <property type="entry name" value="ITPase-like"/>
    <property type="match status" value="1"/>
</dbReference>
<gene>
    <name type="ordered locus">XCV2928</name>
</gene>
<feature type="chain" id="PRO_0000267467" description="dTTP/UTP pyrophosphatase">
    <location>
        <begin position="1"/>
        <end position="190"/>
    </location>
</feature>
<feature type="active site" description="Proton acceptor" evidence="1">
    <location>
        <position position="71"/>
    </location>
</feature>
<feature type="site" description="Important for substrate specificity" evidence="1">
    <location>
        <position position="10"/>
    </location>
</feature>
<feature type="site" description="Important for substrate specificity" evidence="1">
    <location>
        <position position="72"/>
    </location>
</feature>
<feature type="site" description="Important for substrate specificity" evidence="1">
    <location>
        <position position="155"/>
    </location>
</feature>
<evidence type="ECO:0000255" key="1">
    <source>
        <dbReference type="HAMAP-Rule" id="MF_00528"/>
    </source>
</evidence>
<organism>
    <name type="scientific">Xanthomonas euvesicatoria pv. vesicatoria (strain 85-10)</name>
    <name type="common">Xanthomonas campestris pv. vesicatoria</name>
    <dbReference type="NCBI Taxonomy" id="316273"/>
    <lineage>
        <taxon>Bacteria</taxon>
        <taxon>Pseudomonadati</taxon>
        <taxon>Pseudomonadota</taxon>
        <taxon>Gammaproteobacteria</taxon>
        <taxon>Lysobacterales</taxon>
        <taxon>Lysobacteraceae</taxon>
        <taxon>Xanthomonas</taxon>
    </lineage>
</organism>
<reference key="1">
    <citation type="journal article" date="2005" name="J. Bacteriol.">
        <title>Insights into genome plasticity and pathogenicity of the plant pathogenic Bacterium Xanthomonas campestris pv. vesicatoria revealed by the complete genome sequence.</title>
        <authorList>
            <person name="Thieme F."/>
            <person name="Koebnik R."/>
            <person name="Bekel T."/>
            <person name="Berger C."/>
            <person name="Boch J."/>
            <person name="Buettner D."/>
            <person name="Caldana C."/>
            <person name="Gaigalat L."/>
            <person name="Goesmann A."/>
            <person name="Kay S."/>
            <person name="Kirchner O."/>
            <person name="Lanz C."/>
            <person name="Linke B."/>
            <person name="McHardy A.C."/>
            <person name="Meyer F."/>
            <person name="Mittenhuber G."/>
            <person name="Nies D.H."/>
            <person name="Niesbach-Kloesgen U."/>
            <person name="Patschkowski T."/>
            <person name="Rueckert C."/>
            <person name="Rupp O."/>
            <person name="Schneiker S."/>
            <person name="Schuster S.C."/>
            <person name="Vorhoelter F.J."/>
            <person name="Weber E."/>
            <person name="Puehler A."/>
            <person name="Bonas U."/>
            <person name="Bartels D."/>
            <person name="Kaiser O."/>
        </authorList>
    </citation>
    <scope>NUCLEOTIDE SEQUENCE [LARGE SCALE GENOMIC DNA]</scope>
    <source>
        <strain>85-10</strain>
    </source>
</reference>
<accession>Q3BRF4</accession>
<proteinExistence type="inferred from homology"/>
<name>NTPPA_XANE5</name>
<comment type="function">
    <text evidence="1">Nucleoside triphosphate pyrophosphatase that hydrolyzes dTTP and UTP. May have a dual role in cell division arrest and in preventing the incorporation of modified nucleotides into cellular nucleic acids.</text>
</comment>
<comment type="catalytic activity">
    <reaction evidence="1">
        <text>dTTP + H2O = dTMP + diphosphate + H(+)</text>
        <dbReference type="Rhea" id="RHEA:28534"/>
        <dbReference type="ChEBI" id="CHEBI:15377"/>
        <dbReference type="ChEBI" id="CHEBI:15378"/>
        <dbReference type="ChEBI" id="CHEBI:33019"/>
        <dbReference type="ChEBI" id="CHEBI:37568"/>
        <dbReference type="ChEBI" id="CHEBI:63528"/>
        <dbReference type="EC" id="3.6.1.9"/>
    </reaction>
</comment>
<comment type="catalytic activity">
    <reaction evidence="1">
        <text>UTP + H2O = UMP + diphosphate + H(+)</text>
        <dbReference type="Rhea" id="RHEA:29395"/>
        <dbReference type="ChEBI" id="CHEBI:15377"/>
        <dbReference type="ChEBI" id="CHEBI:15378"/>
        <dbReference type="ChEBI" id="CHEBI:33019"/>
        <dbReference type="ChEBI" id="CHEBI:46398"/>
        <dbReference type="ChEBI" id="CHEBI:57865"/>
        <dbReference type="EC" id="3.6.1.9"/>
    </reaction>
</comment>
<comment type="cofactor">
    <cofactor evidence="1">
        <name>a divalent metal cation</name>
        <dbReference type="ChEBI" id="CHEBI:60240"/>
    </cofactor>
</comment>
<comment type="subcellular location">
    <subcellularLocation>
        <location evidence="1">Cytoplasm</location>
    </subcellularLocation>
</comment>
<comment type="similarity">
    <text evidence="1">Belongs to the Maf family. YhdE subfamily.</text>
</comment>
<sequence>MLYLASRSPRRQELLQRLDVPFQTLQLDVPELRAADESPDQYVQRVALEKAHAGLALVQAADPDAIVLGSDTEVVLGERVFGKPVDVDDAVAMLRALSGRTHQVLTAVVLVCAQRAPAQALVVSEVTFDTLDDAQIAAYAACGEPMGKAGAYAIQGRAERFIRHLSGSYSGVMGLPLYHTSQLLTAFGAH</sequence>